<name>KAD_ALBFT</name>
<evidence type="ECO:0000255" key="1">
    <source>
        <dbReference type="HAMAP-Rule" id="MF_00235"/>
    </source>
</evidence>
<accession>Q21TN6</accession>
<reference key="1">
    <citation type="submission" date="2006-02" db="EMBL/GenBank/DDBJ databases">
        <title>Complete sequence of chromosome of Rhodoferax ferrireducens DSM 15236.</title>
        <authorList>
            <person name="Copeland A."/>
            <person name="Lucas S."/>
            <person name="Lapidus A."/>
            <person name="Barry K."/>
            <person name="Detter J.C."/>
            <person name="Glavina del Rio T."/>
            <person name="Hammon N."/>
            <person name="Israni S."/>
            <person name="Pitluck S."/>
            <person name="Brettin T."/>
            <person name="Bruce D."/>
            <person name="Han C."/>
            <person name="Tapia R."/>
            <person name="Gilna P."/>
            <person name="Kiss H."/>
            <person name="Schmutz J."/>
            <person name="Larimer F."/>
            <person name="Land M."/>
            <person name="Kyrpides N."/>
            <person name="Ivanova N."/>
            <person name="Richardson P."/>
        </authorList>
    </citation>
    <scope>NUCLEOTIDE SEQUENCE [LARGE SCALE GENOMIC DNA]</scope>
    <source>
        <strain>ATCC BAA-621 / DSM 15236 / T118</strain>
    </source>
</reference>
<keyword id="KW-0067">ATP-binding</keyword>
<keyword id="KW-0963">Cytoplasm</keyword>
<keyword id="KW-0418">Kinase</keyword>
<keyword id="KW-0545">Nucleotide biosynthesis</keyword>
<keyword id="KW-0547">Nucleotide-binding</keyword>
<keyword id="KW-1185">Reference proteome</keyword>
<keyword id="KW-0808">Transferase</keyword>
<organism>
    <name type="scientific">Albidiferax ferrireducens (strain ATCC BAA-621 / DSM 15236 / T118)</name>
    <name type="common">Rhodoferax ferrireducens</name>
    <dbReference type="NCBI Taxonomy" id="338969"/>
    <lineage>
        <taxon>Bacteria</taxon>
        <taxon>Pseudomonadati</taxon>
        <taxon>Pseudomonadota</taxon>
        <taxon>Betaproteobacteria</taxon>
        <taxon>Burkholderiales</taxon>
        <taxon>Comamonadaceae</taxon>
        <taxon>Rhodoferax</taxon>
    </lineage>
</organism>
<dbReference type="EC" id="2.7.4.3" evidence="1"/>
<dbReference type="EMBL" id="CP000267">
    <property type="protein sequence ID" value="ABD70867.1"/>
    <property type="molecule type" value="Genomic_DNA"/>
</dbReference>
<dbReference type="RefSeq" id="WP_011465430.1">
    <property type="nucleotide sequence ID" value="NC_007908.1"/>
</dbReference>
<dbReference type="SMR" id="Q21TN6"/>
<dbReference type="STRING" id="338969.Rfer_3158"/>
<dbReference type="KEGG" id="rfr:Rfer_3158"/>
<dbReference type="eggNOG" id="COG0563">
    <property type="taxonomic scope" value="Bacteria"/>
</dbReference>
<dbReference type="HOGENOM" id="CLU_032354_1_2_4"/>
<dbReference type="OrthoDB" id="9805030at2"/>
<dbReference type="UniPathway" id="UPA00588">
    <property type="reaction ID" value="UER00649"/>
</dbReference>
<dbReference type="Proteomes" id="UP000008332">
    <property type="component" value="Chromosome"/>
</dbReference>
<dbReference type="GO" id="GO:0005737">
    <property type="term" value="C:cytoplasm"/>
    <property type="evidence" value="ECO:0007669"/>
    <property type="project" value="UniProtKB-SubCell"/>
</dbReference>
<dbReference type="GO" id="GO:0004017">
    <property type="term" value="F:adenylate kinase activity"/>
    <property type="evidence" value="ECO:0007669"/>
    <property type="project" value="UniProtKB-UniRule"/>
</dbReference>
<dbReference type="GO" id="GO:0005524">
    <property type="term" value="F:ATP binding"/>
    <property type="evidence" value="ECO:0007669"/>
    <property type="project" value="UniProtKB-UniRule"/>
</dbReference>
<dbReference type="GO" id="GO:0044209">
    <property type="term" value="P:AMP salvage"/>
    <property type="evidence" value="ECO:0007669"/>
    <property type="project" value="UniProtKB-UniRule"/>
</dbReference>
<dbReference type="CDD" id="cd01428">
    <property type="entry name" value="ADK"/>
    <property type="match status" value="1"/>
</dbReference>
<dbReference type="FunFam" id="3.40.50.300:FF:000106">
    <property type="entry name" value="Adenylate kinase mitochondrial"/>
    <property type="match status" value="1"/>
</dbReference>
<dbReference type="Gene3D" id="3.40.50.300">
    <property type="entry name" value="P-loop containing nucleotide triphosphate hydrolases"/>
    <property type="match status" value="1"/>
</dbReference>
<dbReference type="HAMAP" id="MF_00235">
    <property type="entry name" value="Adenylate_kinase_Adk"/>
    <property type="match status" value="1"/>
</dbReference>
<dbReference type="InterPro" id="IPR006259">
    <property type="entry name" value="Adenyl_kin_sub"/>
</dbReference>
<dbReference type="InterPro" id="IPR000850">
    <property type="entry name" value="Adenylat/UMP-CMP_kin"/>
</dbReference>
<dbReference type="InterPro" id="IPR033690">
    <property type="entry name" value="Adenylat_kinase_CS"/>
</dbReference>
<dbReference type="InterPro" id="IPR007862">
    <property type="entry name" value="Adenylate_kinase_lid-dom"/>
</dbReference>
<dbReference type="InterPro" id="IPR027417">
    <property type="entry name" value="P-loop_NTPase"/>
</dbReference>
<dbReference type="NCBIfam" id="TIGR01351">
    <property type="entry name" value="adk"/>
    <property type="match status" value="1"/>
</dbReference>
<dbReference type="NCBIfam" id="NF001379">
    <property type="entry name" value="PRK00279.1-1"/>
    <property type="match status" value="1"/>
</dbReference>
<dbReference type="NCBIfam" id="NF001380">
    <property type="entry name" value="PRK00279.1-2"/>
    <property type="match status" value="1"/>
</dbReference>
<dbReference type="NCBIfam" id="NF001381">
    <property type="entry name" value="PRK00279.1-3"/>
    <property type="match status" value="1"/>
</dbReference>
<dbReference type="NCBIfam" id="NF011100">
    <property type="entry name" value="PRK14527.1"/>
    <property type="match status" value="1"/>
</dbReference>
<dbReference type="PANTHER" id="PTHR23359">
    <property type="entry name" value="NUCLEOTIDE KINASE"/>
    <property type="match status" value="1"/>
</dbReference>
<dbReference type="Pfam" id="PF00406">
    <property type="entry name" value="ADK"/>
    <property type="match status" value="1"/>
</dbReference>
<dbReference type="Pfam" id="PF05191">
    <property type="entry name" value="ADK_lid"/>
    <property type="match status" value="1"/>
</dbReference>
<dbReference type="PRINTS" id="PR00094">
    <property type="entry name" value="ADENYLTKNASE"/>
</dbReference>
<dbReference type="SUPFAM" id="SSF52540">
    <property type="entry name" value="P-loop containing nucleoside triphosphate hydrolases"/>
    <property type="match status" value="1"/>
</dbReference>
<dbReference type="PROSITE" id="PS00113">
    <property type="entry name" value="ADENYLATE_KINASE"/>
    <property type="match status" value="1"/>
</dbReference>
<proteinExistence type="inferred from homology"/>
<comment type="function">
    <text evidence="1">Catalyzes the reversible transfer of the terminal phosphate group between ATP and AMP. Plays an important role in cellular energy homeostasis and in adenine nucleotide metabolism.</text>
</comment>
<comment type="catalytic activity">
    <reaction evidence="1">
        <text>AMP + ATP = 2 ADP</text>
        <dbReference type="Rhea" id="RHEA:12973"/>
        <dbReference type="ChEBI" id="CHEBI:30616"/>
        <dbReference type="ChEBI" id="CHEBI:456215"/>
        <dbReference type="ChEBI" id="CHEBI:456216"/>
        <dbReference type="EC" id="2.7.4.3"/>
    </reaction>
</comment>
<comment type="pathway">
    <text evidence="1">Purine metabolism; AMP biosynthesis via salvage pathway; AMP from ADP: step 1/1.</text>
</comment>
<comment type="subunit">
    <text evidence="1">Monomer.</text>
</comment>
<comment type="subcellular location">
    <subcellularLocation>
        <location evidence="1">Cytoplasm</location>
    </subcellularLocation>
</comment>
<comment type="domain">
    <text evidence="1">Consists of three domains, a large central CORE domain and two small peripheral domains, NMPbind and LID, which undergo movements during catalysis. The LID domain closes over the site of phosphoryl transfer upon ATP binding. Assembling and dissambling the active center during each catalytic cycle provides an effective means to prevent ATP hydrolysis.</text>
</comment>
<comment type="similarity">
    <text evidence="1">Belongs to the adenylate kinase family.</text>
</comment>
<protein>
    <recommendedName>
        <fullName evidence="1">Adenylate kinase</fullName>
        <shortName evidence="1">AK</shortName>
        <ecNumber evidence="1">2.7.4.3</ecNumber>
    </recommendedName>
    <alternativeName>
        <fullName evidence="1">ATP-AMP transphosphorylase</fullName>
    </alternativeName>
    <alternativeName>
        <fullName evidence="1">ATP:AMP phosphotransferase</fullName>
    </alternativeName>
    <alternativeName>
        <fullName evidence="1">Adenylate monophosphate kinase</fullName>
    </alternativeName>
</protein>
<sequence length="218" mass="23298">MRLILLGAPGAGKGTQATFICQKYGIPQISTGDMLRAAVKAGTPLGIEAKKVMDAGGLVSDDLIINLVKERIAQSDCAAGFLFDGFPRTIPQADAMKAAGVKLDYVLEIDVPFDAIIERMSGRRSHAASGRTYHVKFNPPKVAGVDDVTGEPLIQRDDDKEETVKKRLEVYSAQTRPLVDYYSNWAKAEPAAAPKYRAISGTGGVDEITARAFAALAG</sequence>
<gene>
    <name evidence="1" type="primary">adk</name>
    <name type="ordered locus">Rfer_3158</name>
</gene>
<feature type="chain" id="PRO_1000058888" description="Adenylate kinase">
    <location>
        <begin position="1"/>
        <end position="218"/>
    </location>
</feature>
<feature type="region of interest" description="NMP" evidence="1">
    <location>
        <begin position="30"/>
        <end position="59"/>
    </location>
</feature>
<feature type="region of interest" description="LID" evidence="1">
    <location>
        <begin position="122"/>
        <end position="159"/>
    </location>
</feature>
<feature type="binding site" evidence="1">
    <location>
        <begin position="10"/>
        <end position="15"/>
    </location>
    <ligand>
        <name>ATP</name>
        <dbReference type="ChEBI" id="CHEBI:30616"/>
    </ligand>
</feature>
<feature type="binding site" evidence="1">
    <location>
        <position position="31"/>
    </location>
    <ligand>
        <name>AMP</name>
        <dbReference type="ChEBI" id="CHEBI:456215"/>
    </ligand>
</feature>
<feature type="binding site" evidence="1">
    <location>
        <position position="36"/>
    </location>
    <ligand>
        <name>AMP</name>
        <dbReference type="ChEBI" id="CHEBI:456215"/>
    </ligand>
</feature>
<feature type="binding site" evidence="1">
    <location>
        <begin position="57"/>
        <end position="59"/>
    </location>
    <ligand>
        <name>AMP</name>
        <dbReference type="ChEBI" id="CHEBI:456215"/>
    </ligand>
</feature>
<feature type="binding site" evidence="1">
    <location>
        <begin position="85"/>
        <end position="88"/>
    </location>
    <ligand>
        <name>AMP</name>
        <dbReference type="ChEBI" id="CHEBI:456215"/>
    </ligand>
</feature>
<feature type="binding site" evidence="1">
    <location>
        <position position="92"/>
    </location>
    <ligand>
        <name>AMP</name>
        <dbReference type="ChEBI" id="CHEBI:456215"/>
    </ligand>
</feature>
<feature type="binding site" evidence="1">
    <location>
        <position position="123"/>
    </location>
    <ligand>
        <name>ATP</name>
        <dbReference type="ChEBI" id="CHEBI:30616"/>
    </ligand>
</feature>
<feature type="binding site" evidence="1">
    <location>
        <begin position="132"/>
        <end position="133"/>
    </location>
    <ligand>
        <name>ATP</name>
        <dbReference type="ChEBI" id="CHEBI:30616"/>
    </ligand>
</feature>
<feature type="binding site" evidence="1">
    <location>
        <position position="156"/>
    </location>
    <ligand>
        <name>AMP</name>
        <dbReference type="ChEBI" id="CHEBI:456215"/>
    </ligand>
</feature>
<feature type="binding site" evidence="1">
    <location>
        <position position="167"/>
    </location>
    <ligand>
        <name>AMP</name>
        <dbReference type="ChEBI" id="CHEBI:456215"/>
    </ligand>
</feature>
<feature type="binding site" evidence="1">
    <location>
        <position position="203"/>
    </location>
    <ligand>
        <name>ATP</name>
        <dbReference type="ChEBI" id="CHEBI:30616"/>
    </ligand>
</feature>